<organism>
    <name type="scientific">Trichodesmium erythraeum (strain IMS101)</name>
    <dbReference type="NCBI Taxonomy" id="203124"/>
    <lineage>
        <taxon>Bacteria</taxon>
        <taxon>Bacillati</taxon>
        <taxon>Cyanobacteriota</taxon>
        <taxon>Cyanophyceae</taxon>
        <taxon>Oscillatoriophycideae</taxon>
        <taxon>Oscillatoriales</taxon>
        <taxon>Microcoleaceae</taxon>
        <taxon>Trichodesmium</taxon>
    </lineage>
</organism>
<evidence type="ECO:0000255" key="1">
    <source>
        <dbReference type="HAMAP-Rule" id="MF_01552"/>
    </source>
</evidence>
<name>RIMK_TRIEI</name>
<keyword id="KW-0067">ATP-binding</keyword>
<keyword id="KW-0436">Ligase</keyword>
<keyword id="KW-0460">Magnesium</keyword>
<keyword id="KW-0464">Manganese</keyword>
<keyword id="KW-0479">Metal-binding</keyword>
<keyword id="KW-0547">Nucleotide-binding</keyword>
<keyword id="KW-0648">Protein biosynthesis</keyword>
<protein>
    <recommendedName>
        <fullName evidence="1">Probable alpha-L-glutamate ligase</fullName>
        <ecNumber evidence="1">6.3.2.-</ecNumber>
    </recommendedName>
</protein>
<accession>Q113P2</accession>
<sequence length="299" mass="32348">MKIAILSTDPSLYSTRKLLEAGEQRGHEVYVIDYLRCYMKITSMKTEVIYMGKSLKGFDAIIPRIGASKTFYGTAVVRQFEMMGVFTANPSLAISRSRDKLHCLQLLAREGIELPVTSFAHFTKDINSLINTVGGAPLVIKLLEGSQGIGVVLAETYQVAKSVIEAFSGLNANFLVQEFIEEAGGADVRCFVVGDRVIAAIKRQGTEGEFRSNLHQGGTAKKIKLTPQERSIAMRSAKAIGLKVAGVDLLRSDHGPVVMEVNSSPGLEGIETATGVDVSGKIIEFLEKNLGKGPLGDRL</sequence>
<gene>
    <name evidence="1" type="primary">rimK</name>
    <name type="ordered locus">Tery_2039</name>
</gene>
<reference key="1">
    <citation type="journal article" date="2015" name="Proc. Natl. Acad. Sci. U.S.A.">
        <title>Trichodesmium genome maintains abundant, widespread noncoding DNA in situ, despite oligotrophic lifestyle.</title>
        <authorList>
            <person name="Walworth N."/>
            <person name="Pfreundt U."/>
            <person name="Nelson W.C."/>
            <person name="Mincer T."/>
            <person name="Heidelberg J.F."/>
            <person name="Fu F."/>
            <person name="Waterbury J.B."/>
            <person name="Glavina del Rio T."/>
            <person name="Goodwin L."/>
            <person name="Kyrpides N.C."/>
            <person name="Land M.L."/>
            <person name="Woyke T."/>
            <person name="Hutchins D.A."/>
            <person name="Hess W.R."/>
            <person name="Webb E.A."/>
        </authorList>
    </citation>
    <scope>NUCLEOTIDE SEQUENCE [LARGE SCALE GENOMIC DNA]</scope>
    <source>
        <strain>IMS101</strain>
    </source>
</reference>
<proteinExistence type="inferred from homology"/>
<dbReference type="EC" id="6.3.2.-" evidence="1"/>
<dbReference type="EMBL" id="CP000393">
    <property type="protein sequence ID" value="ABG51282.1"/>
    <property type="molecule type" value="Genomic_DNA"/>
</dbReference>
<dbReference type="RefSeq" id="WP_011611653.1">
    <property type="nucleotide sequence ID" value="NC_008312.1"/>
</dbReference>
<dbReference type="SMR" id="Q113P2"/>
<dbReference type="STRING" id="203124.Tery_2039"/>
<dbReference type="KEGG" id="ter:Tery_2039"/>
<dbReference type="eggNOG" id="COG0189">
    <property type="taxonomic scope" value="Bacteria"/>
</dbReference>
<dbReference type="HOGENOM" id="CLU_054353_0_1_3"/>
<dbReference type="OrthoDB" id="9786585at2"/>
<dbReference type="GO" id="GO:0005737">
    <property type="term" value="C:cytoplasm"/>
    <property type="evidence" value="ECO:0007669"/>
    <property type="project" value="TreeGrafter"/>
</dbReference>
<dbReference type="GO" id="GO:0005524">
    <property type="term" value="F:ATP binding"/>
    <property type="evidence" value="ECO:0007669"/>
    <property type="project" value="UniProtKB-UniRule"/>
</dbReference>
<dbReference type="GO" id="GO:0046872">
    <property type="term" value="F:metal ion binding"/>
    <property type="evidence" value="ECO:0007669"/>
    <property type="project" value="UniProtKB-KW"/>
</dbReference>
<dbReference type="GO" id="GO:0018169">
    <property type="term" value="F:ribosomal S6-glutamic acid ligase activity"/>
    <property type="evidence" value="ECO:0007669"/>
    <property type="project" value="TreeGrafter"/>
</dbReference>
<dbReference type="GO" id="GO:0036211">
    <property type="term" value="P:protein modification process"/>
    <property type="evidence" value="ECO:0007669"/>
    <property type="project" value="InterPro"/>
</dbReference>
<dbReference type="GO" id="GO:0009432">
    <property type="term" value="P:SOS response"/>
    <property type="evidence" value="ECO:0007669"/>
    <property type="project" value="TreeGrafter"/>
</dbReference>
<dbReference type="GO" id="GO:0006412">
    <property type="term" value="P:translation"/>
    <property type="evidence" value="ECO:0007669"/>
    <property type="project" value="UniProtKB-KW"/>
</dbReference>
<dbReference type="FunFam" id="3.30.470.20:FF:000058">
    <property type="entry name" value="Alpha-aminoadipate--LysW ligase LysX protein"/>
    <property type="match status" value="1"/>
</dbReference>
<dbReference type="FunFam" id="3.40.50.20:FF:000004">
    <property type="entry name" value="Probable alpha-L-glutamate ligase"/>
    <property type="match status" value="1"/>
</dbReference>
<dbReference type="FunFam" id="3.30.1490.20:FF:000005">
    <property type="entry name" value="Probable alpha-L-glutamate ligase 1"/>
    <property type="match status" value="1"/>
</dbReference>
<dbReference type="Gene3D" id="3.40.50.20">
    <property type="match status" value="1"/>
</dbReference>
<dbReference type="Gene3D" id="3.30.1490.20">
    <property type="entry name" value="ATP-grasp fold, A domain"/>
    <property type="match status" value="1"/>
</dbReference>
<dbReference type="Gene3D" id="3.30.470.20">
    <property type="entry name" value="ATP-grasp fold, B domain"/>
    <property type="match status" value="1"/>
</dbReference>
<dbReference type="HAMAP" id="MF_01552">
    <property type="entry name" value="RimK"/>
    <property type="match status" value="1"/>
</dbReference>
<dbReference type="InterPro" id="IPR011761">
    <property type="entry name" value="ATP-grasp"/>
</dbReference>
<dbReference type="InterPro" id="IPR013651">
    <property type="entry name" value="ATP-grasp_RimK-type"/>
</dbReference>
<dbReference type="InterPro" id="IPR013815">
    <property type="entry name" value="ATP_grasp_subdomain_1"/>
</dbReference>
<dbReference type="InterPro" id="IPR023533">
    <property type="entry name" value="RimK"/>
</dbReference>
<dbReference type="InterPro" id="IPR041107">
    <property type="entry name" value="Rimk_N"/>
</dbReference>
<dbReference type="InterPro" id="IPR004666">
    <property type="entry name" value="Rp_bS6_RimK/Lys_biosynth_LsyX"/>
</dbReference>
<dbReference type="NCBIfam" id="NF007764">
    <property type="entry name" value="PRK10446.1"/>
    <property type="match status" value="1"/>
</dbReference>
<dbReference type="NCBIfam" id="TIGR00768">
    <property type="entry name" value="rimK_fam"/>
    <property type="match status" value="1"/>
</dbReference>
<dbReference type="PANTHER" id="PTHR21621:SF7">
    <property type="entry name" value="RIBOSOMAL PROTEIN BS6--L-GLUTAMATE LIGASE"/>
    <property type="match status" value="1"/>
</dbReference>
<dbReference type="PANTHER" id="PTHR21621">
    <property type="entry name" value="RIBOSOMAL PROTEIN S6 MODIFICATION PROTEIN"/>
    <property type="match status" value="1"/>
</dbReference>
<dbReference type="Pfam" id="PF08443">
    <property type="entry name" value="RimK"/>
    <property type="match status" value="1"/>
</dbReference>
<dbReference type="Pfam" id="PF18030">
    <property type="entry name" value="Rimk_N"/>
    <property type="match status" value="1"/>
</dbReference>
<dbReference type="SUPFAM" id="SSF56059">
    <property type="entry name" value="Glutathione synthetase ATP-binding domain-like"/>
    <property type="match status" value="1"/>
</dbReference>
<dbReference type="PROSITE" id="PS50975">
    <property type="entry name" value="ATP_GRASP"/>
    <property type="match status" value="1"/>
</dbReference>
<feature type="chain" id="PRO_0000340568" description="Probable alpha-L-glutamate ligase">
    <location>
        <begin position="1"/>
        <end position="299"/>
    </location>
</feature>
<feature type="domain" description="ATP-grasp" evidence="1">
    <location>
        <begin position="104"/>
        <end position="287"/>
    </location>
</feature>
<feature type="binding site" evidence="1">
    <location>
        <position position="141"/>
    </location>
    <ligand>
        <name>ATP</name>
        <dbReference type="ChEBI" id="CHEBI:30616"/>
    </ligand>
</feature>
<feature type="binding site" evidence="1">
    <location>
        <begin position="178"/>
        <end position="179"/>
    </location>
    <ligand>
        <name>ATP</name>
        <dbReference type="ChEBI" id="CHEBI:30616"/>
    </ligand>
</feature>
<feature type="binding site" evidence="1">
    <location>
        <position position="187"/>
    </location>
    <ligand>
        <name>ATP</name>
        <dbReference type="ChEBI" id="CHEBI:30616"/>
    </ligand>
</feature>
<feature type="binding site" evidence="1">
    <location>
        <begin position="211"/>
        <end position="213"/>
    </location>
    <ligand>
        <name>ATP</name>
        <dbReference type="ChEBI" id="CHEBI:30616"/>
    </ligand>
</feature>
<feature type="binding site" evidence="1">
    <location>
        <position position="248"/>
    </location>
    <ligand>
        <name>Mg(2+)</name>
        <dbReference type="ChEBI" id="CHEBI:18420"/>
        <label>1</label>
    </ligand>
</feature>
<feature type="binding site" evidence="1">
    <location>
        <position position="248"/>
    </location>
    <ligand>
        <name>Mn(2+)</name>
        <dbReference type="ChEBI" id="CHEBI:29035"/>
        <label>1</label>
    </ligand>
</feature>
<feature type="binding site" evidence="1">
    <location>
        <position position="260"/>
    </location>
    <ligand>
        <name>Mg(2+)</name>
        <dbReference type="ChEBI" id="CHEBI:18420"/>
        <label>1</label>
    </ligand>
</feature>
<feature type="binding site" evidence="1">
    <location>
        <position position="260"/>
    </location>
    <ligand>
        <name>Mg(2+)</name>
        <dbReference type="ChEBI" id="CHEBI:18420"/>
        <label>2</label>
    </ligand>
</feature>
<feature type="binding site" evidence="1">
    <location>
        <position position="260"/>
    </location>
    <ligand>
        <name>Mn(2+)</name>
        <dbReference type="ChEBI" id="CHEBI:29035"/>
        <label>1</label>
    </ligand>
</feature>
<feature type="binding site" evidence="1">
    <location>
        <position position="260"/>
    </location>
    <ligand>
        <name>Mn(2+)</name>
        <dbReference type="ChEBI" id="CHEBI:29035"/>
        <label>2</label>
    </ligand>
</feature>
<feature type="binding site" evidence="1">
    <location>
        <position position="262"/>
    </location>
    <ligand>
        <name>Mg(2+)</name>
        <dbReference type="ChEBI" id="CHEBI:18420"/>
        <label>2</label>
    </ligand>
</feature>
<feature type="binding site" evidence="1">
    <location>
        <position position="262"/>
    </location>
    <ligand>
        <name>Mn(2+)</name>
        <dbReference type="ChEBI" id="CHEBI:29035"/>
        <label>2</label>
    </ligand>
</feature>
<comment type="cofactor">
    <cofactor evidence="1">
        <name>Mg(2+)</name>
        <dbReference type="ChEBI" id="CHEBI:18420"/>
    </cofactor>
    <cofactor evidence="1">
        <name>Mn(2+)</name>
        <dbReference type="ChEBI" id="CHEBI:29035"/>
    </cofactor>
    <text evidence="1">Binds 2 magnesium or manganese ions per subunit.</text>
</comment>
<comment type="similarity">
    <text evidence="1">Belongs to the RimK family.</text>
</comment>